<evidence type="ECO:0000250" key="1"/>
<evidence type="ECO:0000250" key="2">
    <source>
        <dbReference type="UniProtKB" id="Q9BW19"/>
    </source>
</evidence>
<evidence type="ECO:0000250" key="3">
    <source>
        <dbReference type="UniProtKB" id="Q9QWT9"/>
    </source>
</evidence>
<evidence type="ECO:0000255" key="4"/>
<evidence type="ECO:0000255" key="5">
    <source>
        <dbReference type="PROSITE-ProRule" id="PRU00283"/>
    </source>
</evidence>
<evidence type="ECO:0000256" key="6">
    <source>
        <dbReference type="SAM" id="MobiDB-lite"/>
    </source>
</evidence>
<evidence type="ECO:0000269" key="7">
    <source>
    </source>
</evidence>
<evidence type="ECO:0000305" key="8"/>
<evidence type="ECO:0000312" key="9">
    <source>
        <dbReference type="EMBL" id="CAA58559.1"/>
    </source>
</evidence>
<comment type="function">
    <text evidence="3 7">Minus end-directed microtubule-dependent motor required for bipolar spindle formation (PubMed:7744954). May contribute to movement of early endocytic vesicles (By similarity). Regulates cilium formation and structure (By similarity).</text>
</comment>
<comment type="subunit">
    <text evidence="1">Binds NUBP1 and NUBP2. Interacts with PPP1R42 (By similarity).</text>
</comment>
<comment type="subcellular location">
    <subcellularLocation>
        <location evidence="7">Nucleus</location>
    </subcellularLocation>
    <subcellularLocation>
        <location evidence="7">Cytoplasm</location>
        <location evidence="7">Cytoskeleton</location>
        <location evidence="7">Microtubule organizing center</location>
        <location evidence="7">Centrosome</location>
    </subcellularLocation>
    <subcellularLocation>
        <location evidence="7">Cytoplasm</location>
        <location evidence="7">Cytoskeleton</location>
        <location evidence="7">Spindle</location>
    </subcellularLocation>
    <subcellularLocation>
        <location evidence="3">Early endosome</location>
    </subcellularLocation>
    <text evidence="3 7">Associated with nucleus during interphase, centrosomes in early and spindle in later mitosis.</text>
</comment>
<comment type="similarity">
    <text evidence="5">Belongs to the TRAFAC class myosin-kinesin ATPase superfamily. Kinesin family. NCD subfamily.</text>
</comment>
<protein>
    <recommendedName>
        <fullName>Kinesin-like protein KIFC1</fullName>
    </recommendedName>
    <alternativeName>
        <fullName>CHO2 antigen</fullName>
    </alternativeName>
</protein>
<keyword id="KW-0067">ATP-binding</keyword>
<keyword id="KW-0131">Cell cycle</keyword>
<keyword id="KW-0132">Cell division</keyword>
<keyword id="KW-0175">Coiled coil</keyword>
<keyword id="KW-0963">Cytoplasm</keyword>
<keyword id="KW-0206">Cytoskeleton</keyword>
<keyword id="KW-0967">Endosome</keyword>
<keyword id="KW-0493">Microtubule</keyword>
<keyword id="KW-0498">Mitosis</keyword>
<keyword id="KW-0505">Motor protein</keyword>
<keyword id="KW-0547">Nucleotide-binding</keyword>
<keyword id="KW-0539">Nucleus</keyword>
<keyword id="KW-0597">Phosphoprotein</keyword>
<dbReference type="EMBL" id="X83576">
    <property type="protein sequence ID" value="CAA58559.1"/>
    <property type="molecule type" value="mRNA"/>
</dbReference>
<dbReference type="PIR" id="A57281">
    <property type="entry name" value="A57281"/>
</dbReference>
<dbReference type="SMR" id="Q60443"/>
<dbReference type="PaxDb" id="10029-XP_007623248.1"/>
<dbReference type="eggNOG" id="KOG0239">
    <property type="taxonomic scope" value="Eukaryota"/>
</dbReference>
<dbReference type="Proteomes" id="UP000694386">
    <property type="component" value="Unplaced"/>
</dbReference>
<dbReference type="Proteomes" id="UP001108280">
    <property type="component" value="Unplaced"/>
</dbReference>
<dbReference type="GO" id="GO:0005813">
    <property type="term" value="C:centrosome"/>
    <property type="evidence" value="ECO:0007669"/>
    <property type="project" value="UniProtKB-SubCell"/>
</dbReference>
<dbReference type="GO" id="GO:0005769">
    <property type="term" value="C:early endosome"/>
    <property type="evidence" value="ECO:0007669"/>
    <property type="project" value="UniProtKB-SubCell"/>
</dbReference>
<dbReference type="GO" id="GO:0005874">
    <property type="term" value="C:microtubule"/>
    <property type="evidence" value="ECO:0007669"/>
    <property type="project" value="UniProtKB-KW"/>
</dbReference>
<dbReference type="GO" id="GO:0030496">
    <property type="term" value="C:midbody"/>
    <property type="evidence" value="ECO:0000314"/>
    <property type="project" value="UniProtKB"/>
</dbReference>
<dbReference type="GO" id="GO:0005634">
    <property type="term" value="C:nucleus"/>
    <property type="evidence" value="ECO:0007669"/>
    <property type="project" value="UniProtKB-SubCell"/>
</dbReference>
<dbReference type="GO" id="GO:0005819">
    <property type="term" value="C:spindle"/>
    <property type="evidence" value="ECO:0007669"/>
    <property type="project" value="UniProtKB-SubCell"/>
</dbReference>
<dbReference type="GO" id="GO:0005524">
    <property type="term" value="F:ATP binding"/>
    <property type="evidence" value="ECO:0007669"/>
    <property type="project" value="UniProtKB-KW"/>
</dbReference>
<dbReference type="GO" id="GO:0008017">
    <property type="term" value="F:microtubule binding"/>
    <property type="evidence" value="ECO:0007669"/>
    <property type="project" value="InterPro"/>
</dbReference>
<dbReference type="GO" id="GO:0003777">
    <property type="term" value="F:microtubule motor activity"/>
    <property type="evidence" value="ECO:0007669"/>
    <property type="project" value="InterPro"/>
</dbReference>
<dbReference type="GO" id="GO:0051301">
    <property type="term" value="P:cell division"/>
    <property type="evidence" value="ECO:0007669"/>
    <property type="project" value="UniProtKB-KW"/>
</dbReference>
<dbReference type="GO" id="GO:0007018">
    <property type="term" value="P:microtubule-based movement"/>
    <property type="evidence" value="ECO:0007669"/>
    <property type="project" value="InterPro"/>
</dbReference>
<dbReference type="CDD" id="cd01366">
    <property type="entry name" value="KISc_C_terminal"/>
    <property type="match status" value="1"/>
</dbReference>
<dbReference type="FunFam" id="1.10.287.1490:FF:000008">
    <property type="entry name" value="Kinesin-like protein"/>
    <property type="match status" value="1"/>
</dbReference>
<dbReference type="FunFam" id="3.40.850.10:FF:000046">
    <property type="entry name" value="Kinesin-like protein"/>
    <property type="match status" value="1"/>
</dbReference>
<dbReference type="Gene3D" id="1.10.287.1490">
    <property type="match status" value="1"/>
</dbReference>
<dbReference type="Gene3D" id="3.40.850.10">
    <property type="entry name" value="Kinesin motor domain"/>
    <property type="match status" value="1"/>
</dbReference>
<dbReference type="InterPro" id="IPR027640">
    <property type="entry name" value="Kinesin-like_fam"/>
</dbReference>
<dbReference type="InterPro" id="IPR019821">
    <property type="entry name" value="Kinesin_motor_CS"/>
</dbReference>
<dbReference type="InterPro" id="IPR001752">
    <property type="entry name" value="Kinesin_motor_dom"/>
</dbReference>
<dbReference type="InterPro" id="IPR036961">
    <property type="entry name" value="Kinesin_motor_dom_sf"/>
</dbReference>
<dbReference type="InterPro" id="IPR027417">
    <property type="entry name" value="P-loop_NTPase"/>
</dbReference>
<dbReference type="PANTHER" id="PTHR47972">
    <property type="entry name" value="KINESIN-LIKE PROTEIN KLP-3"/>
    <property type="match status" value="1"/>
</dbReference>
<dbReference type="PANTHER" id="PTHR47972:SF45">
    <property type="entry name" value="PROTEIN CLARET SEGREGATIONAL"/>
    <property type="match status" value="1"/>
</dbReference>
<dbReference type="Pfam" id="PF00225">
    <property type="entry name" value="Kinesin"/>
    <property type="match status" value="1"/>
</dbReference>
<dbReference type="PRINTS" id="PR00380">
    <property type="entry name" value="KINESINHEAVY"/>
</dbReference>
<dbReference type="SMART" id="SM00129">
    <property type="entry name" value="KISc"/>
    <property type="match status" value="1"/>
</dbReference>
<dbReference type="SUPFAM" id="SSF52540">
    <property type="entry name" value="P-loop containing nucleoside triphosphate hydrolases"/>
    <property type="match status" value="1"/>
</dbReference>
<dbReference type="PROSITE" id="PS00411">
    <property type="entry name" value="KINESIN_MOTOR_1"/>
    <property type="match status" value="1"/>
</dbReference>
<dbReference type="PROSITE" id="PS50067">
    <property type="entry name" value="KINESIN_MOTOR_2"/>
    <property type="match status" value="1"/>
</dbReference>
<reference evidence="8 9" key="1">
    <citation type="journal article" date="1995" name="J. Cell Biol.">
        <title>Characterization of a minus end-directed kinesin-like motor protein from cultured mammalian cells.</title>
        <authorList>
            <person name="Kuriyama R."/>
            <person name="Kofron M."/>
            <person name="Essner R."/>
            <person name="Kato T."/>
            <person name="Dragas-Granoic S."/>
            <person name="Omoto C.K."/>
            <person name="Khodjakov A."/>
        </authorList>
    </citation>
    <scope>NUCLEOTIDE SEQUENCE [MRNA]</scope>
    <scope>FUNCTION</scope>
    <scope>SUBCELLULAR LOCATION</scope>
</reference>
<sequence>MKEALEPAKKRTRGLGAVTKIDTSRSKGPLLSSLSQPQGPTAAQKGPKKTGPRGCTAVGSVLKNQKLAPTAPAQKPVRKRPGKRPDWDLKGQLCDLTEELKCYREKTQKLDQENQGLQEQLKEAQEQAAALGTERNTLEGELASVRTQAEQCQQKLEALCARVLELEEWLGTKENLIQELQKEQLELQEERKALATRLEEQERRLQASEAALLSNESEVVCLRQKTAAQVTLLAEQGDRLHGLEMERRRLHNQLQELKGNIRVFCRVRPVLAGEPTPSPGFLLFPHGPAGPSDPPTRLSLSRSDDRRSTLTRAPAPTTRHDFSFDRVFPPGSKQEEVFEEISMLVQSALDGYPVCIFAYGQTGSGKTFTMEGRPGGDPQLEGLIPRRMRHLFSVAQEMSGQGWTYSFVASYVEIYNETVRDLLATGTRKGQGECEIRRARPGSEELTVTNARYVPVSCEREVEALLHLAHQNRAVARTAQNERSSRSHSVFQLQISGEHAARGLQCVAPLNLVDLAGSERLDPGLTLGPGERDRLRETQSINSSLSTLGLVIMALSNKESHVPYRNSKLTYLLQNSLGGSAKMLMFVNISPLEENVSESLNSLRFASKVNQCVIGTAQANKK</sequence>
<accession>Q60443</accession>
<feature type="chain" id="PRO_0000302088" description="Kinesin-like protein KIFC1">
    <location>
        <begin position="1"/>
        <end position="622"/>
    </location>
</feature>
<feature type="domain" description="Kinesin motor" evidence="5">
    <location>
        <begin position="260"/>
        <end position="612"/>
    </location>
</feature>
<feature type="region of interest" description="Disordered" evidence="6">
    <location>
        <begin position="1"/>
        <end position="88"/>
    </location>
</feature>
<feature type="region of interest" description="Disordered" evidence="6">
    <location>
        <begin position="279"/>
        <end position="323"/>
    </location>
</feature>
<feature type="coiled-coil region" evidence="4">
    <location>
        <begin position="95"/>
        <end position="264"/>
    </location>
</feature>
<feature type="compositionally biased region" description="Polar residues" evidence="6">
    <location>
        <begin position="32"/>
        <end position="41"/>
    </location>
</feature>
<feature type="binding site" evidence="5">
    <location>
        <begin position="360"/>
        <end position="367"/>
    </location>
    <ligand>
        <name>ATP</name>
        <dbReference type="ChEBI" id="CHEBI:30616"/>
    </ligand>
</feature>
<feature type="modified residue" description="Phosphothreonine" evidence="2">
    <location>
        <position position="309"/>
    </location>
</feature>
<proteinExistence type="evidence at transcript level"/>
<name>KIFC1_CRIGR</name>
<organism>
    <name type="scientific">Cricetulus griseus</name>
    <name type="common">Chinese hamster</name>
    <name type="synonym">Cricetulus barabensis griseus</name>
    <dbReference type="NCBI Taxonomy" id="10029"/>
    <lineage>
        <taxon>Eukaryota</taxon>
        <taxon>Metazoa</taxon>
        <taxon>Chordata</taxon>
        <taxon>Craniata</taxon>
        <taxon>Vertebrata</taxon>
        <taxon>Euteleostomi</taxon>
        <taxon>Mammalia</taxon>
        <taxon>Eutheria</taxon>
        <taxon>Euarchontoglires</taxon>
        <taxon>Glires</taxon>
        <taxon>Rodentia</taxon>
        <taxon>Myomorpha</taxon>
        <taxon>Muroidea</taxon>
        <taxon>Cricetidae</taxon>
        <taxon>Cricetinae</taxon>
        <taxon>Cricetulus</taxon>
    </lineage>
</organism>